<name>NLPI_ECO8N</name>
<protein>
    <recommendedName>
        <fullName>Lipoprotein NlpI</fullName>
    </recommendedName>
</protein>
<reference key="1">
    <citation type="journal article" date="2010" name="BMC Genomics">
        <title>Genome sequence of adherent-invasive Escherichia coli and comparative genomic analysis with other E. coli pathotypes.</title>
        <authorList>
            <person name="Nash J.H."/>
            <person name="Villegas A."/>
            <person name="Kropinski A.M."/>
            <person name="Aguilar-Valenzuela R."/>
            <person name="Konczy P."/>
            <person name="Mascarenhas M."/>
            <person name="Ziebell K."/>
            <person name="Torres A.G."/>
            <person name="Karmali M.A."/>
            <person name="Coombes B.K."/>
        </authorList>
    </citation>
    <scope>NUCLEOTIDE SEQUENCE [LARGE SCALE GENOMIC DNA]</scope>
    <source>
        <strain>NRG 857C / AIEC</strain>
    </source>
</reference>
<gene>
    <name type="primary">nlpI</name>
    <name type="ordered locus">NRG857_15695</name>
</gene>
<keyword id="KW-0131">Cell cycle</keyword>
<keyword id="KW-0132">Cell division</keyword>
<keyword id="KW-1003">Cell membrane</keyword>
<keyword id="KW-0449">Lipoprotein</keyword>
<keyword id="KW-0472">Membrane</keyword>
<keyword id="KW-0564">Palmitate</keyword>
<keyword id="KW-1185">Reference proteome</keyword>
<keyword id="KW-0677">Repeat</keyword>
<keyword id="KW-0732">Signal</keyword>
<keyword id="KW-0802">TPR repeat</keyword>
<feature type="signal peptide" evidence="2">
    <location>
        <begin position="1"/>
        <end position="18"/>
    </location>
</feature>
<feature type="chain" id="PRO_0000413479" description="Lipoprotein NlpI">
    <location>
        <begin position="19"/>
        <end position="294"/>
    </location>
</feature>
<feature type="repeat" description="TPR 1">
    <location>
        <begin position="62"/>
        <end position="95"/>
    </location>
</feature>
<feature type="repeat" description="TPR 2">
    <location>
        <begin position="96"/>
        <end position="129"/>
    </location>
</feature>
<feature type="repeat" description="TPR 3">
    <location>
        <begin position="234"/>
        <end position="267"/>
    </location>
</feature>
<feature type="lipid moiety-binding region" description="N-palmitoyl cysteine" evidence="2">
    <location>
        <position position="19"/>
    </location>
</feature>
<feature type="lipid moiety-binding region" description="S-diacylglycerol cysteine" evidence="2">
    <location>
        <position position="19"/>
    </location>
</feature>
<sequence>MKPFLRWCFVATALTLAGCSNTSWRKSEVLAVPLQPTLQQEVILARMEQILASRALTDDERAQLLYERGVLYDSLGLRALARNDFSQALAIRPDMPEVFNYLGIYLTQAGNFDAAYEAFDSVLELDPTYNYAHLNRGIALYYGGRDKLAQDDLLAFYQDDPNDPFRSLWLYLAEQKLDEKQAKEVLKQHFEKSDKEQWGWNIVEFYLGNISEQTLMERLKADATDNTSLAEHLSETNFYLGKYYLSLGDLDSATALFKLAVANNVHNFVEHRYALLELSLLGQDQDDLAESDQQ</sequence>
<accession>E4P9W4</accession>
<dbReference type="EMBL" id="CP001855">
    <property type="protein sequence ID" value="ADR28549.1"/>
    <property type="molecule type" value="Genomic_DNA"/>
</dbReference>
<dbReference type="RefSeq" id="WP_000802080.1">
    <property type="nucleotide sequence ID" value="NC_017634.1"/>
</dbReference>
<dbReference type="RefSeq" id="YP_006121483.1">
    <property type="nucleotide sequence ID" value="NC_017634.1"/>
</dbReference>
<dbReference type="SMR" id="E4P9W4"/>
<dbReference type="GeneID" id="93778820"/>
<dbReference type="KEGG" id="eln:NRG857_15695"/>
<dbReference type="PATRIC" id="fig|685038.3.peg.3205"/>
<dbReference type="HOGENOM" id="CLU_071600_0_0_6"/>
<dbReference type="Proteomes" id="UP000008614">
    <property type="component" value="Chromosome"/>
</dbReference>
<dbReference type="GO" id="GO:0005886">
    <property type="term" value="C:plasma membrane"/>
    <property type="evidence" value="ECO:0007669"/>
    <property type="project" value="UniProtKB-SubCell"/>
</dbReference>
<dbReference type="GO" id="GO:0051301">
    <property type="term" value="P:cell division"/>
    <property type="evidence" value="ECO:0007669"/>
    <property type="project" value="UniProtKB-KW"/>
</dbReference>
<dbReference type="FunFam" id="1.25.40.10:FF:000021">
    <property type="entry name" value="Lipoprotein NlpI"/>
    <property type="match status" value="1"/>
</dbReference>
<dbReference type="Gene3D" id="1.25.40.10">
    <property type="entry name" value="Tetratricopeptide repeat domain"/>
    <property type="match status" value="1"/>
</dbReference>
<dbReference type="InterPro" id="IPR023605">
    <property type="entry name" value="Lipoprotein_NlpI"/>
</dbReference>
<dbReference type="InterPro" id="IPR011990">
    <property type="entry name" value="TPR-like_helical_dom_sf"/>
</dbReference>
<dbReference type="InterPro" id="IPR019734">
    <property type="entry name" value="TPR_rpt"/>
</dbReference>
<dbReference type="InterPro" id="IPR050498">
    <property type="entry name" value="Ycf3"/>
</dbReference>
<dbReference type="NCBIfam" id="NF008391">
    <property type="entry name" value="PRK11189.1"/>
    <property type="match status" value="1"/>
</dbReference>
<dbReference type="PANTHER" id="PTHR44858">
    <property type="entry name" value="TETRATRICOPEPTIDE REPEAT PROTEIN 6"/>
    <property type="match status" value="1"/>
</dbReference>
<dbReference type="PANTHER" id="PTHR44858:SF1">
    <property type="entry name" value="UDP-N-ACETYLGLUCOSAMINE--PEPTIDE N-ACETYLGLUCOSAMINYLTRANSFERASE SPINDLY-RELATED"/>
    <property type="match status" value="1"/>
</dbReference>
<dbReference type="Pfam" id="PF13432">
    <property type="entry name" value="TPR_16"/>
    <property type="match status" value="1"/>
</dbReference>
<dbReference type="PIRSF" id="PIRSF004654">
    <property type="entry name" value="NlpI"/>
    <property type="match status" value="1"/>
</dbReference>
<dbReference type="SMART" id="SM00028">
    <property type="entry name" value="TPR"/>
    <property type="match status" value="3"/>
</dbReference>
<dbReference type="SUPFAM" id="SSF48452">
    <property type="entry name" value="TPR-like"/>
    <property type="match status" value="1"/>
</dbReference>
<dbReference type="PROSITE" id="PS51257">
    <property type="entry name" value="PROKAR_LIPOPROTEIN"/>
    <property type="match status" value="1"/>
</dbReference>
<dbReference type="PROSITE" id="PS50005">
    <property type="entry name" value="TPR"/>
    <property type="match status" value="3"/>
</dbReference>
<dbReference type="PROSITE" id="PS50293">
    <property type="entry name" value="TPR_REGION"/>
    <property type="match status" value="2"/>
</dbReference>
<organism>
    <name type="scientific">Escherichia coli O83:H1 (strain NRG 857C / AIEC)</name>
    <dbReference type="NCBI Taxonomy" id="685038"/>
    <lineage>
        <taxon>Bacteria</taxon>
        <taxon>Pseudomonadati</taxon>
        <taxon>Pseudomonadota</taxon>
        <taxon>Gammaproteobacteria</taxon>
        <taxon>Enterobacterales</taxon>
        <taxon>Enterobacteriaceae</taxon>
        <taxon>Escherichia</taxon>
    </lineage>
</organism>
<proteinExistence type="inferred from homology"/>
<comment type="function">
    <text evidence="1">May be involved in cell division. May play a role in bacterial septation or regulation of cell wall degradation during cell division (By similarity).</text>
</comment>
<comment type="subunit">
    <text evidence="1">Homodimer.</text>
</comment>
<comment type="subcellular location">
    <subcellularLocation>
        <location evidence="2">Cell membrane</location>
        <topology evidence="2">Lipid-anchor</topology>
    </subcellularLocation>
</comment>
<evidence type="ECO:0000250" key="1"/>
<evidence type="ECO:0000255" key="2">
    <source>
        <dbReference type="PROSITE-ProRule" id="PRU00303"/>
    </source>
</evidence>